<dbReference type="EMBL" id="CP000239">
    <property type="protein sequence ID" value="ABD00257.1"/>
    <property type="molecule type" value="Genomic_DNA"/>
</dbReference>
<dbReference type="RefSeq" id="WP_011430931.1">
    <property type="nucleotide sequence ID" value="NC_007775.1"/>
</dbReference>
<dbReference type="SMR" id="Q2JSV7"/>
<dbReference type="STRING" id="321327.CYA_2117"/>
<dbReference type="KEGG" id="cya:CYA_2117"/>
<dbReference type="eggNOG" id="COG0636">
    <property type="taxonomic scope" value="Bacteria"/>
</dbReference>
<dbReference type="HOGENOM" id="CLU_148047_2_0_3"/>
<dbReference type="OrthoDB" id="9810379at2"/>
<dbReference type="Proteomes" id="UP000008818">
    <property type="component" value="Chromosome"/>
</dbReference>
<dbReference type="GO" id="GO:0031676">
    <property type="term" value="C:plasma membrane-derived thylakoid membrane"/>
    <property type="evidence" value="ECO:0007669"/>
    <property type="project" value="UniProtKB-SubCell"/>
</dbReference>
<dbReference type="GO" id="GO:0045259">
    <property type="term" value="C:proton-transporting ATP synthase complex"/>
    <property type="evidence" value="ECO:0007669"/>
    <property type="project" value="UniProtKB-KW"/>
</dbReference>
<dbReference type="GO" id="GO:0033177">
    <property type="term" value="C:proton-transporting two-sector ATPase complex, proton-transporting domain"/>
    <property type="evidence" value="ECO:0007669"/>
    <property type="project" value="InterPro"/>
</dbReference>
<dbReference type="GO" id="GO:0008289">
    <property type="term" value="F:lipid binding"/>
    <property type="evidence" value="ECO:0007669"/>
    <property type="project" value="UniProtKB-KW"/>
</dbReference>
<dbReference type="GO" id="GO:0046933">
    <property type="term" value="F:proton-transporting ATP synthase activity, rotational mechanism"/>
    <property type="evidence" value="ECO:0007669"/>
    <property type="project" value="UniProtKB-UniRule"/>
</dbReference>
<dbReference type="FunFam" id="1.20.20.10:FF:000001">
    <property type="entry name" value="ATP synthase subunit c, chloroplastic"/>
    <property type="match status" value="1"/>
</dbReference>
<dbReference type="Gene3D" id="1.20.20.10">
    <property type="entry name" value="F1F0 ATP synthase subunit C"/>
    <property type="match status" value="1"/>
</dbReference>
<dbReference type="HAMAP" id="MF_01396">
    <property type="entry name" value="ATP_synth_c_bact"/>
    <property type="match status" value="1"/>
</dbReference>
<dbReference type="InterPro" id="IPR005953">
    <property type="entry name" value="ATP_synth_csu_bac/chlpt"/>
</dbReference>
<dbReference type="InterPro" id="IPR000454">
    <property type="entry name" value="ATP_synth_F0_csu"/>
</dbReference>
<dbReference type="InterPro" id="IPR020537">
    <property type="entry name" value="ATP_synth_F0_csu_DDCD_BS"/>
</dbReference>
<dbReference type="InterPro" id="IPR038662">
    <property type="entry name" value="ATP_synth_F0_csu_sf"/>
</dbReference>
<dbReference type="InterPro" id="IPR002379">
    <property type="entry name" value="ATPase_proteolipid_c-like_dom"/>
</dbReference>
<dbReference type="InterPro" id="IPR035921">
    <property type="entry name" value="F/V-ATP_Csub_sf"/>
</dbReference>
<dbReference type="NCBIfam" id="TIGR01260">
    <property type="entry name" value="ATP_synt_c"/>
    <property type="match status" value="1"/>
</dbReference>
<dbReference type="NCBIfam" id="NF005608">
    <property type="entry name" value="PRK07354.1"/>
    <property type="match status" value="1"/>
</dbReference>
<dbReference type="PANTHER" id="PTHR10031">
    <property type="entry name" value="ATP SYNTHASE LIPID-BINDING PROTEIN, MITOCHONDRIAL"/>
    <property type="match status" value="1"/>
</dbReference>
<dbReference type="PANTHER" id="PTHR10031:SF48">
    <property type="entry name" value="ATP SYNTHASE SUBUNIT C, CHLOROPLASTIC"/>
    <property type="match status" value="1"/>
</dbReference>
<dbReference type="Pfam" id="PF00137">
    <property type="entry name" value="ATP-synt_C"/>
    <property type="match status" value="1"/>
</dbReference>
<dbReference type="PRINTS" id="PR00124">
    <property type="entry name" value="ATPASEC"/>
</dbReference>
<dbReference type="SUPFAM" id="SSF81333">
    <property type="entry name" value="F1F0 ATP synthase subunit C"/>
    <property type="match status" value="1"/>
</dbReference>
<dbReference type="PROSITE" id="PS00605">
    <property type="entry name" value="ATPASE_C"/>
    <property type="match status" value="1"/>
</dbReference>
<name>ATPL_SYNJA</name>
<protein>
    <recommendedName>
        <fullName evidence="1">ATP synthase subunit c</fullName>
    </recommendedName>
    <alternativeName>
        <fullName evidence="1">ATP synthase F(0) sector subunit c</fullName>
    </alternativeName>
    <alternativeName>
        <fullName evidence="1">F-type ATPase subunit c</fullName>
        <shortName evidence="1">F-ATPase subunit c</shortName>
    </alternativeName>
    <alternativeName>
        <fullName evidence="1">Lipid-binding protein</fullName>
    </alternativeName>
</protein>
<evidence type="ECO:0000255" key="1">
    <source>
        <dbReference type="HAMAP-Rule" id="MF_01396"/>
    </source>
</evidence>
<reference key="1">
    <citation type="journal article" date="2007" name="ISME J.">
        <title>Population level functional diversity in a microbial community revealed by comparative genomic and metagenomic analyses.</title>
        <authorList>
            <person name="Bhaya D."/>
            <person name="Grossman A.R."/>
            <person name="Steunou A.-S."/>
            <person name="Khuri N."/>
            <person name="Cohan F.M."/>
            <person name="Hamamura N."/>
            <person name="Melendrez M.C."/>
            <person name="Bateson M.M."/>
            <person name="Ward D.M."/>
            <person name="Heidelberg J.F."/>
        </authorList>
    </citation>
    <scope>NUCLEOTIDE SEQUENCE [LARGE SCALE GENOMIC DNA]</scope>
    <source>
        <strain>JA-3-3Ab</strain>
    </source>
</reference>
<comment type="function">
    <text evidence="1">F(1)F(0) ATP synthase produces ATP from ADP in the presence of a proton or sodium gradient. F-type ATPases consist of two structural domains, F(1) containing the extramembraneous catalytic core and F(0) containing the membrane proton channel, linked together by a central stalk and a peripheral stalk. During catalysis, ATP synthesis in the catalytic domain of F(1) is coupled via a rotary mechanism of the central stalk subunits to proton translocation.</text>
</comment>
<comment type="function">
    <text evidence="1">Key component of the F(0) channel; it plays a direct role in translocation across the membrane. A homomeric c-ring of between 10-14 subunits forms the central stalk rotor element with the F(1) delta and epsilon subunits.</text>
</comment>
<comment type="subunit">
    <text evidence="1">F-type ATPases have 2 components, F(1) - the catalytic core - and F(0) - the membrane proton channel. F(1) has five subunits: alpha(3), beta(3), gamma(1), delta(1), epsilon(1). F(0) has four main subunits: a(1), b(1), b'(1) and c(10-14). The alpha and beta chains form an alternating ring which encloses part of the gamma chain. F(1) is attached to F(0) by a central stalk formed by the gamma and epsilon chains, while a peripheral stalk is formed by the delta, b and b' chains.</text>
</comment>
<comment type="subcellular location">
    <subcellularLocation>
        <location evidence="1">Cellular thylakoid membrane</location>
        <topology evidence="1">Multi-pass membrane protein</topology>
    </subcellularLocation>
</comment>
<comment type="similarity">
    <text evidence="1">Belongs to the ATPase C chain family.</text>
</comment>
<accession>Q2JSV7</accession>
<organism>
    <name type="scientific">Synechococcus sp. (strain JA-3-3Ab)</name>
    <name type="common">Cyanobacteria bacterium Yellowstone A-Prime</name>
    <dbReference type="NCBI Taxonomy" id="321327"/>
    <lineage>
        <taxon>Bacteria</taxon>
        <taxon>Bacillati</taxon>
        <taxon>Cyanobacteriota</taxon>
        <taxon>Cyanophyceae</taxon>
        <taxon>Synechococcales</taxon>
        <taxon>Synechococcaceae</taxon>
        <taxon>Synechococcus</taxon>
    </lineage>
</organism>
<keyword id="KW-0066">ATP synthesis</keyword>
<keyword id="KW-0138">CF(0)</keyword>
<keyword id="KW-0375">Hydrogen ion transport</keyword>
<keyword id="KW-0406">Ion transport</keyword>
<keyword id="KW-0446">Lipid-binding</keyword>
<keyword id="KW-0472">Membrane</keyword>
<keyword id="KW-0793">Thylakoid</keyword>
<keyword id="KW-0812">Transmembrane</keyword>
<keyword id="KW-1133">Transmembrane helix</keyword>
<keyword id="KW-0813">Transport</keyword>
<feature type="chain" id="PRO_1000184518" description="ATP synthase subunit c">
    <location>
        <begin position="1"/>
        <end position="81"/>
    </location>
</feature>
<feature type="transmembrane region" description="Helical" evidence="1">
    <location>
        <begin position="7"/>
        <end position="27"/>
    </location>
</feature>
<feature type="transmembrane region" description="Helical" evidence="1">
    <location>
        <begin position="57"/>
        <end position="77"/>
    </location>
</feature>
<feature type="site" description="Reversibly protonated during proton transport" evidence="1">
    <location>
        <position position="61"/>
    </location>
</feature>
<sequence>MDPLTSAASVLSAALAIGLGSLGPGLGQGNAAAAAMEGLARQPEAEDKIRGNLLVSLAFMEALTIYGLVVALVLLFANPFA</sequence>
<gene>
    <name evidence="1" type="primary">atpE</name>
    <name evidence="1" type="synonym">atpH</name>
    <name type="ordered locus">CYA_2117</name>
</gene>
<proteinExistence type="inferred from homology"/>